<proteinExistence type="inferred from homology"/>
<comment type="function">
    <text evidence="1">Exports L-alanine.</text>
</comment>
<comment type="subcellular location">
    <subcellularLocation>
        <location evidence="1">Cell inner membrane</location>
        <topology evidence="1">Multi-pass membrane protein</topology>
    </subcellularLocation>
</comment>
<comment type="similarity">
    <text evidence="1">Belongs to the AlaE exporter family.</text>
</comment>
<gene>
    <name evidence="1" type="primary">alaE</name>
    <name type="ordered locus">Pat9b_4640</name>
</gene>
<sequence>MALSWQSLIDRITNLAKNQRQKKRGTEFLADTVALILFFTTTGIINERMIAGMSWDQVLHARLIGAALMIPVARPYGIWRDWLMQRANPSRGSQLLWDSMALVSFQVPIYAAIIAFSGATGGGLVRGTLGAALMMLFLGRPYGAFLNWVRKLFGLPPGGDKPMSLDS</sequence>
<organism>
    <name type="scientific">Pantoea sp. (strain At-9b)</name>
    <dbReference type="NCBI Taxonomy" id="592316"/>
    <lineage>
        <taxon>Bacteria</taxon>
        <taxon>Pseudomonadati</taxon>
        <taxon>Pseudomonadota</taxon>
        <taxon>Gammaproteobacteria</taxon>
        <taxon>Enterobacterales</taxon>
        <taxon>Erwiniaceae</taxon>
        <taxon>Pantoea</taxon>
    </lineage>
</organism>
<evidence type="ECO:0000255" key="1">
    <source>
        <dbReference type="HAMAP-Rule" id="MF_00914"/>
    </source>
</evidence>
<protein>
    <recommendedName>
        <fullName evidence="1">L-alanine exporter AlaE</fullName>
    </recommendedName>
</protein>
<reference key="1">
    <citation type="submission" date="2010-12" db="EMBL/GenBank/DDBJ databases">
        <title>Complete sequence plasmid3 of Pantoea sp. At-9b.</title>
        <authorList>
            <consortium name="US DOE Joint Genome Institute"/>
            <person name="Lucas S."/>
            <person name="Copeland A."/>
            <person name="Lapidus A."/>
            <person name="Cheng J.-F."/>
            <person name="Goodwin L."/>
            <person name="Pitluck S."/>
            <person name="Davenport K."/>
            <person name="Detter J.C."/>
            <person name="Han C."/>
            <person name="Tapia R."/>
            <person name="Land M."/>
            <person name="Hauser L."/>
            <person name="Kyrpides N."/>
            <person name="Ivanova N."/>
            <person name="Ovchinnikova G."/>
            <person name="Pinto A."/>
            <person name="Currie C."/>
            <person name="Woyke T."/>
        </authorList>
    </citation>
    <scope>NUCLEOTIDE SEQUENCE [LARGE SCALE GENOMIC DNA]</scope>
    <source>
        <strain>At-9b</strain>
    </source>
</reference>
<geneLocation type="plasmid">
    <name>pPAT9B03</name>
</geneLocation>
<name>ALAE_PANSA</name>
<accession>E6WMH4</accession>
<keyword id="KW-0029">Amino-acid transport</keyword>
<keyword id="KW-0997">Cell inner membrane</keyword>
<keyword id="KW-1003">Cell membrane</keyword>
<keyword id="KW-0472">Membrane</keyword>
<keyword id="KW-0614">Plasmid</keyword>
<keyword id="KW-0812">Transmembrane</keyword>
<keyword id="KW-1133">Transmembrane helix</keyword>
<keyword id="KW-0813">Transport</keyword>
<feature type="chain" id="PRO_0000415624" description="L-alanine exporter AlaE">
    <location>
        <begin position="1"/>
        <end position="167"/>
    </location>
</feature>
<feature type="transmembrane region" description="Helical" evidence="1">
    <location>
        <begin position="25"/>
        <end position="45"/>
    </location>
</feature>
<feature type="transmembrane region" description="Helical" evidence="1">
    <location>
        <begin position="50"/>
        <end position="70"/>
    </location>
</feature>
<feature type="transmembrane region" description="Helical" evidence="1">
    <location>
        <begin position="105"/>
        <end position="125"/>
    </location>
</feature>
<feature type="transmembrane region" description="Helical" evidence="1">
    <location>
        <begin position="129"/>
        <end position="149"/>
    </location>
</feature>
<dbReference type="EMBL" id="CP002436">
    <property type="protein sequence ID" value="ADU72609.1"/>
    <property type="molecule type" value="Genomic_DNA"/>
</dbReference>
<dbReference type="RefSeq" id="WP_013512438.1">
    <property type="nucleotide sequence ID" value="NC_014840.1"/>
</dbReference>
<dbReference type="KEGG" id="pao:Pat9b_4640"/>
<dbReference type="HOGENOM" id="CLU_126493_1_0_6"/>
<dbReference type="Proteomes" id="UP000001624">
    <property type="component" value="Plasmid pPAT9B03"/>
</dbReference>
<dbReference type="GO" id="GO:0005886">
    <property type="term" value="C:plasma membrane"/>
    <property type="evidence" value="ECO:0007669"/>
    <property type="project" value="UniProtKB-SubCell"/>
</dbReference>
<dbReference type="GO" id="GO:0034639">
    <property type="term" value="F:L-amino acid efflux transmembrane transporter activity"/>
    <property type="evidence" value="ECO:0007669"/>
    <property type="project" value="UniProtKB-UniRule"/>
</dbReference>
<dbReference type="GO" id="GO:0032973">
    <property type="term" value="P:amino acid export across plasma membrane"/>
    <property type="evidence" value="ECO:0007669"/>
    <property type="project" value="UniProtKB-UniRule"/>
</dbReference>
<dbReference type="HAMAP" id="MF_00914">
    <property type="entry name" value="L_Ala_exporter"/>
    <property type="match status" value="1"/>
</dbReference>
<dbReference type="InterPro" id="IPR010574">
    <property type="entry name" value="Ala_export_AlaE"/>
</dbReference>
<dbReference type="Pfam" id="PF06610">
    <property type="entry name" value="AlaE"/>
    <property type="match status" value="1"/>
</dbReference>